<feature type="signal peptide" evidence="1">
    <location>
        <begin position="1"/>
        <end position="29"/>
    </location>
</feature>
<feature type="chain" id="PRO_0000019303" description="Myelin protein P0">
    <location>
        <begin position="30"/>
        <end position="249"/>
    </location>
</feature>
<feature type="topological domain" description="Extracellular" evidence="3">
    <location>
        <begin position="30"/>
        <end position="153"/>
    </location>
</feature>
<feature type="transmembrane region" description="Helical" evidence="3">
    <location>
        <begin position="154"/>
        <end position="179"/>
    </location>
</feature>
<feature type="topological domain" description="Cytoplasmic">
    <location>
        <begin position="180"/>
        <end position="249"/>
    </location>
</feature>
<feature type="domain" description="Ig-like V-type">
    <location>
        <begin position="30"/>
        <end position="143"/>
    </location>
</feature>
<feature type="region of interest" description="Disordered" evidence="5">
    <location>
        <begin position="227"/>
        <end position="249"/>
    </location>
</feature>
<feature type="glycosylation site" description="N-linked (GlcNAc...) asparagine" evidence="3">
    <location>
        <position position="122"/>
    </location>
</feature>
<feature type="disulfide bond" evidence="4">
    <location>
        <begin position="50"/>
        <end position="127"/>
    </location>
</feature>
<accession>P37301</accession>
<gene>
    <name type="primary">MPZ</name>
</gene>
<protein>
    <recommendedName>
        <fullName>Myelin protein P0</fullName>
    </recommendedName>
    <alternativeName>
        <fullName>Myelin peripheral protein</fullName>
        <shortName>MPP</shortName>
    </alternativeName>
    <alternativeName>
        <fullName>Myelin protein zero</fullName>
    </alternativeName>
</protein>
<sequence length="249" mass="27467">MALGAIGDGRLLLLLVGLLSASGPSPTLAIHVYTPREVYGTVGSHVTLSCSFWSSEWISEDISYTWHFQAEGSRDSISIFHYGKGQPYIDDVGSFKERMEWVGNPRRKDGSIVIHNLDYTDNGTFTCDVKNPPDIVGKSSQVTLYVLEKVPTRYGVVLGSIIGGVLLLVALLVAVVYLVRFCWLRRQAVLQRRLSAMEKGKLQRSAKDASKRSRQPPVLYAMLDHSRSAKAAAEKKSKGAPGEARKDKK</sequence>
<keyword id="KW-1003">Cell membrane</keyword>
<keyword id="KW-1015">Disulfide bond</keyword>
<keyword id="KW-0325">Glycoprotein</keyword>
<keyword id="KW-0393">Immunoglobulin domain</keyword>
<keyword id="KW-0472">Membrane</keyword>
<keyword id="KW-0597">Phosphoprotein</keyword>
<keyword id="KW-1185">Reference proteome</keyword>
<keyword id="KW-0732">Signal</keyword>
<keyword id="KW-0812">Transmembrane</keyword>
<keyword id="KW-1133">Transmembrane helix</keyword>
<reference key="1">
    <citation type="journal article" date="1990" name="J. Neurosci. Res.">
        <title>Molecular cloning of cDNAs that encode the chicken P0 protein: evidence for early expression in avians.</title>
        <authorList>
            <person name="Barbu M."/>
        </authorList>
    </citation>
    <scope>NUCLEOTIDE SEQUENCE [MRNA]</scope>
</reference>
<organism>
    <name type="scientific">Gallus gallus</name>
    <name type="common">Chicken</name>
    <dbReference type="NCBI Taxonomy" id="9031"/>
    <lineage>
        <taxon>Eukaryota</taxon>
        <taxon>Metazoa</taxon>
        <taxon>Chordata</taxon>
        <taxon>Craniata</taxon>
        <taxon>Vertebrata</taxon>
        <taxon>Euteleostomi</taxon>
        <taxon>Archelosauria</taxon>
        <taxon>Archosauria</taxon>
        <taxon>Dinosauria</taxon>
        <taxon>Saurischia</taxon>
        <taxon>Theropoda</taxon>
        <taxon>Coelurosauria</taxon>
        <taxon>Aves</taxon>
        <taxon>Neognathae</taxon>
        <taxon>Galloanserae</taxon>
        <taxon>Galliformes</taxon>
        <taxon>Phasianidae</taxon>
        <taxon>Phasianinae</taxon>
        <taxon>Gallus</taxon>
    </lineage>
</organism>
<name>MYP0_CHICK</name>
<evidence type="ECO:0000250" key="1"/>
<evidence type="ECO:0000250" key="2">
    <source>
        <dbReference type="UniProtKB" id="P25189"/>
    </source>
</evidence>
<evidence type="ECO:0000255" key="3"/>
<evidence type="ECO:0000255" key="4">
    <source>
        <dbReference type="PROSITE-ProRule" id="PRU00114"/>
    </source>
</evidence>
<evidence type="ECO:0000256" key="5">
    <source>
        <dbReference type="SAM" id="MobiDB-lite"/>
    </source>
</evidence>
<evidence type="ECO:0000305" key="6"/>
<comment type="function">
    <text evidence="2">Is an adhesion molecule necessary for normal myelination in the peripheral nervous system. It mediates adhesion between adjacent myelin wraps and ultimately drives myelin compaction.</text>
</comment>
<comment type="subcellular location">
    <subcellularLocation>
        <location evidence="2">Cell membrane</location>
        <topology evidence="2">Single-pass type I membrane protein</topology>
    </subcellularLocation>
</comment>
<comment type="tissue specificity">
    <text>Found only in peripheral nervous system Schwann cells.</text>
</comment>
<comment type="similarity">
    <text evidence="6">Belongs to the myelin P0 protein family.</text>
</comment>
<dbReference type="PIR" id="A61087">
    <property type="entry name" value="A61087"/>
</dbReference>
<dbReference type="SMR" id="P37301"/>
<dbReference type="FunCoup" id="P37301">
    <property type="interactions" value="79"/>
</dbReference>
<dbReference type="IntAct" id="P37301">
    <property type="interactions" value="1"/>
</dbReference>
<dbReference type="STRING" id="9031.ENSGALP00000045144"/>
<dbReference type="GlyCosmos" id="P37301">
    <property type="glycosylation" value="1 site, No reported glycans"/>
</dbReference>
<dbReference type="GlyGen" id="P37301">
    <property type="glycosylation" value="1 site"/>
</dbReference>
<dbReference type="PaxDb" id="9031-ENSGALP00000042850"/>
<dbReference type="VEuPathDB" id="HostDB:geneid_100859605"/>
<dbReference type="eggNOG" id="ENOG502QVJ0">
    <property type="taxonomic scope" value="Eukaryota"/>
</dbReference>
<dbReference type="InParanoid" id="P37301"/>
<dbReference type="OrthoDB" id="9941287at2759"/>
<dbReference type="PhylomeDB" id="P37301"/>
<dbReference type="Proteomes" id="UP000000539">
    <property type="component" value="Unassembled WGS sequence"/>
</dbReference>
<dbReference type="GO" id="GO:0005886">
    <property type="term" value="C:plasma membrane"/>
    <property type="evidence" value="ECO:0000250"/>
    <property type="project" value="UniProtKB"/>
</dbReference>
<dbReference type="GO" id="GO:0098743">
    <property type="term" value="P:cell aggregation"/>
    <property type="evidence" value="ECO:0000250"/>
    <property type="project" value="UniProtKB"/>
</dbReference>
<dbReference type="GO" id="GO:0098742">
    <property type="term" value="P:cell-cell adhesion via plasma-membrane adhesion molecules"/>
    <property type="evidence" value="ECO:0000250"/>
    <property type="project" value="UniProtKB"/>
</dbReference>
<dbReference type="GO" id="GO:0042552">
    <property type="term" value="P:myelination"/>
    <property type="evidence" value="ECO:0000250"/>
    <property type="project" value="UniProtKB"/>
</dbReference>
<dbReference type="CDD" id="cd05879">
    <property type="entry name" value="IgV_P0"/>
    <property type="match status" value="1"/>
</dbReference>
<dbReference type="FunFam" id="2.60.40.10:FF:000193">
    <property type="entry name" value="Myelin protein zero-like 1 like"/>
    <property type="match status" value="1"/>
</dbReference>
<dbReference type="Gene3D" id="2.60.40.10">
    <property type="entry name" value="Immunoglobulins"/>
    <property type="match status" value="1"/>
</dbReference>
<dbReference type="InterPro" id="IPR007110">
    <property type="entry name" value="Ig-like_dom"/>
</dbReference>
<dbReference type="InterPro" id="IPR036179">
    <property type="entry name" value="Ig-like_dom_sf"/>
</dbReference>
<dbReference type="InterPro" id="IPR013783">
    <property type="entry name" value="Ig-like_fold"/>
</dbReference>
<dbReference type="InterPro" id="IPR003599">
    <property type="entry name" value="Ig_sub"/>
</dbReference>
<dbReference type="InterPro" id="IPR013106">
    <property type="entry name" value="Ig_V-set"/>
</dbReference>
<dbReference type="InterPro" id="IPR000920">
    <property type="entry name" value="Myelin_P0-rel"/>
</dbReference>
<dbReference type="InterPro" id="IPR019738">
    <property type="entry name" value="Myelin_P0_CS"/>
</dbReference>
<dbReference type="InterPro" id="IPR047014">
    <property type="entry name" value="Myelin_P0_Ig-like"/>
</dbReference>
<dbReference type="InterPro" id="IPR019566">
    <property type="entry name" value="MYP0_C"/>
</dbReference>
<dbReference type="PANTHER" id="PTHR13869">
    <property type="entry name" value="MYELIN P0 RELATED"/>
    <property type="match status" value="1"/>
</dbReference>
<dbReference type="PANTHER" id="PTHR13869:SF7">
    <property type="entry name" value="MYELIN PROTEIN P0"/>
    <property type="match status" value="1"/>
</dbReference>
<dbReference type="Pfam" id="PF10570">
    <property type="entry name" value="Myelin-PO_C"/>
    <property type="match status" value="1"/>
</dbReference>
<dbReference type="Pfam" id="PF07686">
    <property type="entry name" value="V-set"/>
    <property type="match status" value="1"/>
</dbReference>
<dbReference type="PRINTS" id="PR00213">
    <property type="entry name" value="MYELINP0"/>
</dbReference>
<dbReference type="SMART" id="SM00409">
    <property type="entry name" value="IG"/>
    <property type="match status" value="1"/>
</dbReference>
<dbReference type="SMART" id="SM00406">
    <property type="entry name" value="IGv"/>
    <property type="match status" value="1"/>
</dbReference>
<dbReference type="SUPFAM" id="SSF48726">
    <property type="entry name" value="Immunoglobulin"/>
    <property type="match status" value="1"/>
</dbReference>
<dbReference type="PROSITE" id="PS50835">
    <property type="entry name" value="IG_LIKE"/>
    <property type="match status" value="1"/>
</dbReference>
<dbReference type="PROSITE" id="PS00568">
    <property type="entry name" value="MYELIN_P0"/>
    <property type="match status" value="1"/>
</dbReference>
<proteinExistence type="evidence at transcript level"/>